<reference key="1">
    <citation type="journal article" date="2005" name="Nucleic Acids Res.">
        <title>Genome dynamics and diversity of Shigella species, the etiologic agents of bacillary dysentery.</title>
        <authorList>
            <person name="Yang F."/>
            <person name="Yang J."/>
            <person name="Zhang X."/>
            <person name="Chen L."/>
            <person name="Jiang Y."/>
            <person name="Yan Y."/>
            <person name="Tang X."/>
            <person name="Wang J."/>
            <person name="Xiong Z."/>
            <person name="Dong J."/>
            <person name="Xue Y."/>
            <person name="Zhu Y."/>
            <person name="Xu X."/>
            <person name="Sun L."/>
            <person name="Chen S."/>
            <person name="Nie H."/>
            <person name="Peng J."/>
            <person name="Xu J."/>
            <person name="Wang Y."/>
            <person name="Yuan Z."/>
            <person name="Wen Y."/>
            <person name="Yao Z."/>
            <person name="Shen Y."/>
            <person name="Qiang B."/>
            <person name="Hou Y."/>
            <person name="Yu J."/>
            <person name="Jin Q."/>
        </authorList>
    </citation>
    <scope>NUCLEOTIDE SEQUENCE [LARGE SCALE GENOMIC DNA]</scope>
    <source>
        <strain>Sd197</strain>
    </source>
</reference>
<organism>
    <name type="scientific">Shigella dysenteriae serotype 1 (strain Sd197)</name>
    <dbReference type="NCBI Taxonomy" id="300267"/>
    <lineage>
        <taxon>Bacteria</taxon>
        <taxon>Pseudomonadati</taxon>
        <taxon>Pseudomonadota</taxon>
        <taxon>Gammaproteobacteria</taxon>
        <taxon>Enterobacterales</taxon>
        <taxon>Enterobacteriaceae</taxon>
        <taxon>Shigella</taxon>
    </lineage>
</organism>
<keyword id="KW-0963">Cytoplasm</keyword>
<keyword id="KW-0328">Glycosyltransferase</keyword>
<keyword id="KW-0660">Purine salvage</keyword>
<keyword id="KW-1185">Reference proteome</keyword>
<keyword id="KW-0808">Transferase</keyword>
<evidence type="ECO:0000255" key="1">
    <source>
        <dbReference type="HAMAP-Rule" id="MF_00004"/>
    </source>
</evidence>
<feature type="chain" id="PRO_1000000339" description="Adenine phosphoribosyltransferase">
    <location>
        <begin position="1"/>
        <end position="183"/>
    </location>
</feature>
<comment type="function">
    <text evidence="1">Catalyzes a salvage reaction resulting in the formation of AMP, that is energically less costly than de novo synthesis.</text>
</comment>
<comment type="catalytic activity">
    <reaction evidence="1">
        <text>AMP + diphosphate = 5-phospho-alpha-D-ribose 1-diphosphate + adenine</text>
        <dbReference type="Rhea" id="RHEA:16609"/>
        <dbReference type="ChEBI" id="CHEBI:16708"/>
        <dbReference type="ChEBI" id="CHEBI:33019"/>
        <dbReference type="ChEBI" id="CHEBI:58017"/>
        <dbReference type="ChEBI" id="CHEBI:456215"/>
        <dbReference type="EC" id="2.4.2.7"/>
    </reaction>
</comment>
<comment type="pathway">
    <text evidence="1">Purine metabolism; AMP biosynthesis via salvage pathway; AMP from adenine: step 1/1.</text>
</comment>
<comment type="subunit">
    <text evidence="1">Homodimer.</text>
</comment>
<comment type="subcellular location">
    <subcellularLocation>
        <location evidence="1">Cytoplasm</location>
    </subcellularLocation>
</comment>
<comment type="similarity">
    <text evidence="1">Belongs to the purine/pyrimidine phosphoribosyltransferase family.</text>
</comment>
<sequence>MTATAQQLEYLKNSIKSIQDYPKPGILFRDVTSLLEDPKAYALSIDLLVERYKNAGITKVVGTEARGFLFGAPVALGLGVGFVPVRKPGKLPRETISETYDLEYGTDQLEIHVDAIKPGDKVLVVDDLLATGGTIEATVKLIRRLGGEVADAAFIINLFDLGGEQRLEKQGITSYSLVPFPGH</sequence>
<name>APT_SHIDS</name>
<protein>
    <recommendedName>
        <fullName evidence="1">Adenine phosphoribosyltransferase</fullName>
        <shortName evidence="1">APRT</shortName>
        <ecNumber evidence="1">2.4.2.7</ecNumber>
    </recommendedName>
</protein>
<proteinExistence type="inferred from homology"/>
<dbReference type="EC" id="2.4.2.7" evidence="1"/>
<dbReference type="EMBL" id="CP000034">
    <property type="protein sequence ID" value="ABB60658.1"/>
    <property type="molecule type" value="Genomic_DNA"/>
</dbReference>
<dbReference type="RefSeq" id="WP_000127356.1">
    <property type="nucleotide sequence ID" value="NC_007606.1"/>
</dbReference>
<dbReference type="RefSeq" id="YP_402147.1">
    <property type="nucleotide sequence ID" value="NC_007606.1"/>
</dbReference>
<dbReference type="SMR" id="Q32J49"/>
<dbReference type="STRING" id="300267.SDY_0450"/>
<dbReference type="EnsemblBacteria" id="ABB60658">
    <property type="protein sequence ID" value="ABB60658"/>
    <property type="gene ID" value="SDY_0450"/>
</dbReference>
<dbReference type="GeneID" id="93776981"/>
<dbReference type="KEGG" id="sdy:SDY_0450"/>
<dbReference type="PATRIC" id="fig|300267.13.peg.533"/>
<dbReference type="HOGENOM" id="CLU_063339_3_0_6"/>
<dbReference type="UniPathway" id="UPA00588">
    <property type="reaction ID" value="UER00646"/>
</dbReference>
<dbReference type="Proteomes" id="UP000002716">
    <property type="component" value="Chromosome"/>
</dbReference>
<dbReference type="GO" id="GO:0005737">
    <property type="term" value="C:cytoplasm"/>
    <property type="evidence" value="ECO:0007669"/>
    <property type="project" value="UniProtKB-SubCell"/>
</dbReference>
<dbReference type="GO" id="GO:0002055">
    <property type="term" value="F:adenine binding"/>
    <property type="evidence" value="ECO:0007669"/>
    <property type="project" value="TreeGrafter"/>
</dbReference>
<dbReference type="GO" id="GO:0003999">
    <property type="term" value="F:adenine phosphoribosyltransferase activity"/>
    <property type="evidence" value="ECO:0007669"/>
    <property type="project" value="UniProtKB-UniRule"/>
</dbReference>
<dbReference type="GO" id="GO:0016208">
    <property type="term" value="F:AMP binding"/>
    <property type="evidence" value="ECO:0007669"/>
    <property type="project" value="TreeGrafter"/>
</dbReference>
<dbReference type="GO" id="GO:0006168">
    <property type="term" value="P:adenine salvage"/>
    <property type="evidence" value="ECO:0007669"/>
    <property type="project" value="InterPro"/>
</dbReference>
<dbReference type="GO" id="GO:0044209">
    <property type="term" value="P:AMP salvage"/>
    <property type="evidence" value="ECO:0007669"/>
    <property type="project" value="UniProtKB-UniRule"/>
</dbReference>
<dbReference type="GO" id="GO:0006166">
    <property type="term" value="P:purine ribonucleoside salvage"/>
    <property type="evidence" value="ECO:0007669"/>
    <property type="project" value="UniProtKB-KW"/>
</dbReference>
<dbReference type="CDD" id="cd06223">
    <property type="entry name" value="PRTases_typeI"/>
    <property type="match status" value="1"/>
</dbReference>
<dbReference type="FunFam" id="3.40.50.2020:FF:000004">
    <property type="entry name" value="Adenine phosphoribosyltransferase"/>
    <property type="match status" value="1"/>
</dbReference>
<dbReference type="Gene3D" id="3.40.50.2020">
    <property type="match status" value="1"/>
</dbReference>
<dbReference type="HAMAP" id="MF_00004">
    <property type="entry name" value="Aden_phosphoribosyltr"/>
    <property type="match status" value="1"/>
</dbReference>
<dbReference type="InterPro" id="IPR005764">
    <property type="entry name" value="Ade_phspho_trans"/>
</dbReference>
<dbReference type="InterPro" id="IPR000836">
    <property type="entry name" value="PRibTrfase_dom"/>
</dbReference>
<dbReference type="InterPro" id="IPR029057">
    <property type="entry name" value="PRTase-like"/>
</dbReference>
<dbReference type="InterPro" id="IPR050054">
    <property type="entry name" value="UPRTase/APRTase"/>
</dbReference>
<dbReference type="NCBIfam" id="TIGR01090">
    <property type="entry name" value="apt"/>
    <property type="match status" value="1"/>
</dbReference>
<dbReference type="NCBIfam" id="NF002632">
    <property type="entry name" value="PRK02304.1-1"/>
    <property type="match status" value="1"/>
</dbReference>
<dbReference type="NCBIfam" id="NF002633">
    <property type="entry name" value="PRK02304.1-2"/>
    <property type="match status" value="1"/>
</dbReference>
<dbReference type="NCBIfam" id="NF002634">
    <property type="entry name" value="PRK02304.1-3"/>
    <property type="match status" value="1"/>
</dbReference>
<dbReference type="NCBIfam" id="NF002636">
    <property type="entry name" value="PRK02304.1-5"/>
    <property type="match status" value="1"/>
</dbReference>
<dbReference type="PANTHER" id="PTHR32315">
    <property type="entry name" value="ADENINE PHOSPHORIBOSYLTRANSFERASE"/>
    <property type="match status" value="1"/>
</dbReference>
<dbReference type="PANTHER" id="PTHR32315:SF3">
    <property type="entry name" value="ADENINE PHOSPHORIBOSYLTRANSFERASE"/>
    <property type="match status" value="1"/>
</dbReference>
<dbReference type="Pfam" id="PF00156">
    <property type="entry name" value="Pribosyltran"/>
    <property type="match status" value="1"/>
</dbReference>
<dbReference type="SUPFAM" id="SSF53271">
    <property type="entry name" value="PRTase-like"/>
    <property type="match status" value="1"/>
</dbReference>
<dbReference type="PROSITE" id="PS00103">
    <property type="entry name" value="PUR_PYR_PR_TRANSFER"/>
    <property type="match status" value="1"/>
</dbReference>
<accession>Q32J49</accession>
<gene>
    <name evidence="1" type="primary">apt</name>
    <name type="ordered locus">SDY_0450</name>
</gene>